<evidence type="ECO:0000255" key="1">
    <source>
        <dbReference type="HAMAP-Rule" id="MF_01152"/>
    </source>
</evidence>
<keyword id="KW-0143">Chaperone</keyword>
<keyword id="KW-0963">Cytoplasm</keyword>
<keyword id="KW-0235">DNA replication</keyword>
<keyword id="KW-0479">Metal-binding</keyword>
<keyword id="KW-0677">Repeat</keyword>
<keyword id="KW-0346">Stress response</keyword>
<keyword id="KW-0862">Zinc</keyword>
<keyword id="KW-0863">Zinc-finger</keyword>
<proteinExistence type="inferred from homology"/>
<sequence>MAKRDYYEVLGVAKNASDDEIKKAYRKLAMKYHPDRNPDSKDAEEHFKEAKEAYEMLSDGQKRAAYDQYGHAGVDPNMGGAGGQGFGGFADAFGDIFGDIFGQAAGGAARGGRGGPQVYRGADLRYSMEITLEQAAHGYDTQIRVPSWVSCEVCHGSGAKPGTKPETCPTCHGQGTVRMSQGFFSIQQTCPKCHGTGTYIPEPCVHCHGSGKVKETKTLEVKIPAGIDDGMRIRSAGNGEPGINGGPPGDLYVEIHIKPHSVFERDGDDLHCQMPIPFTTAALGGEIEVPTLAGRASFPVPEGTQSGKTFRLRGKGIKGLRSSIAGDLYVHVQVETPVKLTDQQRDLLKQFEKSLAEGGARHSPQSKSWFDRVKSFFE</sequence>
<feature type="chain" id="PRO_1000137664" description="Chaperone protein DnaJ">
    <location>
        <begin position="1"/>
        <end position="378"/>
    </location>
</feature>
<feature type="domain" description="J" evidence="1">
    <location>
        <begin position="5"/>
        <end position="70"/>
    </location>
</feature>
<feature type="repeat" description="CXXCXGXG motif">
    <location>
        <begin position="151"/>
        <end position="158"/>
    </location>
</feature>
<feature type="repeat" description="CXXCXGXG motif">
    <location>
        <begin position="168"/>
        <end position="175"/>
    </location>
</feature>
<feature type="repeat" description="CXXCXGXG motif">
    <location>
        <begin position="190"/>
        <end position="197"/>
    </location>
</feature>
<feature type="repeat" description="CXXCXGXG motif">
    <location>
        <begin position="204"/>
        <end position="211"/>
    </location>
</feature>
<feature type="zinc finger region" description="CR-type" evidence="1">
    <location>
        <begin position="138"/>
        <end position="216"/>
    </location>
</feature>
<feature type="binding site" evidence="1">
    <location>
        <position position="151"/>
    </location>
    <ligand>
        <name>Zn(2+)</name>
        <dbReference type="ChEBI" id="CHEBI:29105"/>
        <label>1</label>
    </ligand>
</feature>
<feature type="binding site" evidence="1">
    <location>
        <position position="154"/>
    </location>
    <ligand>
        <name>Zn(2+)</name>
        <dbReference type="ChEBI" id="CHEBI:29105"/>
        <label>1</label>
    </ligand>
</feature>
<feature type="binding site" evidence="1">
    <location>
        <position position="168"/>
    </location>
    <ligand>
        <name>Zn(2+)</name>
        <dbReference type="ChEBI" id="CHEBI:29105"/>
        <label>2</label>
    </ligand>
</feature>
<feature type="binding site" evidence="1">
    <location>
        <position position="171"/>
    </location>
    <ligand>
        <name>Zn(2+)</name>
        <dbReference type="ChEBI" id="CHEBI:29105"/>
        <label>2</label>
    </ligand>
</feature>
<feature type="binding site" evidence="1">
    <location>
        <position position="190"/>
    </location>
    <ligand>
        <name>Zn(2+)</name>
        <dbReference type="ChEBI" id="CHEBI:29105"/>
        <label>2</label>
    </ligand>
</feature>
<feature type="binding site" evidence="1">
    <location>
        <position position="193"/>
    </location>
    <ligand>
        <name>Zn(2+)</name>
        <dbReference type="ChEBI" id="CHEBI:29105"/>
        <label>2</label>
    </ligand>
</feature>
<feature type="binding site" evidence="1">
    <location>
        <position position="204"/>
    </location>
    <ligand>
        <name>Zn(2+)</name>
        <dbReference type="ChEBI" id="CHEBI:29105"/>
        <label>1</label>
    </ligand>
</feature>
<feature type="binding site" evidence="1">
    <location>
        <position position="207"/>
    </location>
    <ligand>
        <name>Zn(2+)</name>
        <dbReference type="ChEBI" id="CHEBI:29105"/>
        <label>1</label>
    </ligand>
</feature>
<name>DNAJ_BURA4</name>
<accession>B1YTK1</accession>
<reference key="1">
    <citation type="submission" date="2008-04" db="EMBL/GenBank/DDBJ databases">
        <title>Complete sequence of chromosome 1 of Burkholderia ambifaria MC40-6.</title>
        <authorList>
            <person name="Copeland A."/>
            <person name="Lucas S."/>
            <person name="Lapidus A."/>
            <person name="Glavina del Rio T."/>
            <person name="Dalin E."/>
            <person name="Tice H."/>
            <person name="Pitluck S."/>
            <person name="Chain P."/>
            <person name="Malfatti S."/>
            <person name="Shin M."/>
            <person name="Vergez L."/>
            <person name="Lang D."/>
            <person name="Schmutz J."/>
            <person name="Larimer F."/>
            <person name="Land M."/>
            <person name="Hauser L."/>
            <person name="Kyrpides N."/>
            <person name="Lykidis A."/>
            <person name="Ramette A."/>
            <person name="Konstantinidis K."/>
            <person name="Tiedje J."/>
            <person name="Richardson P."/>
        </authorList>
    </citation>
    <scope>NUCLEOTIDE SEQUENCE [LARGE SCALE GENOMIC DNA]</scope>
    <source>
        <strain>MC40-6</strain>
    </source>
</reference>
<comment type="function">
    <text evidence="1">Participates actively in the response to hyperosmotic and heat shock by preventing the aggregation of stress-denatured proteins and by disaggregating proteins, also in an autonomous, DnaK-independent fashion. Unfolded proteins bind initially to DnaJ; upon interaction with the DnaJ-bound protein, DnaK hydrolyzes its bound ATP, resulting in the formation of a stable complex. GrpE releases ADP from DnaK; ATP binding to DnaK triggers the release of the substrate protein, thus completing the reaction cycle. Several rounds of ATP-dependent interactions between DnaJ, DnaK and GrpE are required for fully efficient folding. Also involved, together with DnaK and GrpE, in the DNA replication of plasmids through activation of initiation proteins.</text>
</comment>
<comment type="cofactor">
    <cofactor evidence="1">
        <name>Zn(2+)</name>
        <dbReference type="ChEBI" id="CHEBI:29105"/>
    </cofactor>
    <text evidence="1">Binds 2 Zn(2+) ions per monomer.</text>
</comment>
<comment type="subunit">
    <text evidence="1">Homodimer.</text>
</comment>
<comment type="subcellular location">
    <subcellularLocation>
        <location evidence="1">Cytoplasm</location>
    </subcellularLocation>
</comment>
<comment type="domain">
    <text evidence="1">The J domain is necessary and sufficient to stimulate DnaK ATPase activity. Zinc center 1 plays an important role in the autonomous, DnaK-independent chaperone activity of DnaJ. Zinc center 2 is essential for interaction with DnaK and for DnaJ activity.</text>
</comment>
<comment type="similarity">
    <text evidence="1">Belongs to the DnaJ family.</text>
</comment>
<gene>
    <name evidence="1" type="primary">dnaJ</name>
    <name type="ordered locus">BamMC406_0670</name>
</gene>
<dbReference type="EMBL" id="CP001025">
    <property type="protein sequence ID" value="ACB63166.1"/>
    <property type="molecule type" value="Genomic_DNA"/>
</dbReference>
<dbReference type="RefSeq" id="WP_011656039.1">
    <property type="nucleotide sequence ID" value="NC_010551.1"/>
</dbReference>
<dbReference type="SMR" id="B1YTK1"/>
<dbReference type="GeneID" id="93083943"/>
<dbReference type="KEGG" id="bac:BamMC406_0670"/>
<dbReference type="HOGENOM" id="CLU_017633_0_7_4"/>
<dbReference type="OrthoDB" id="9779889at2"/>
<dbReference type="Proteomes" id="UP000001680">
    <property type="component" value="Chromosome 1"/>
</dbReference>
<dbReference type="GO" id="GO:0005737">
    <property type="term" value="C:cytoplasm"/>
    <property type="evidence" value="ECO:0007669"/>
    <property type="project" value="UniProtKB-SubCell"/>
</dbReference>
<dbReference type="GO" id="GO:0005524">
    <property type="term" value="F:ATP binding"/>
    <property type="evidence" value="ECO:0007669"/>
    <property type="project" value="InterPro"/>
</dbReference>
<dbReference type="GO" id="GO:0031072">
    <property type="term" value="F:heat shock protein binding"/>
    <property type="evidence" value="ECO:0007669"/>
    <property type="project" value="InterPro"/>
</dbReference>
<dbReference type="GO" id="GO:0051082">
    <property type="term" value="F:unfolded protein binding"/>
    <property type="evidence" value="ECO:0007669"/>
    <property type="project" value="UniProtKB-UniRule"/>
</dbReference>
<dbReference type="GO" id="GO:0008270">
    <property type="term" value="F:zinc ion binding"/>
    <property type="evidence" value="ECO:0007669"/>
    <property type="project" value="UniProtKB-UniRule"/>
</dbReference>
<dbReference type="GO" id="GO:0051085">
    <property type="term" value="P:chaperone cofactor-dependent protein refolding"/>
    <property type="evidence" value="ECO:0007669"/>
    <property type="project" value="TreeGrafter"/>
</dbReference>
<dbReference type="GO" id="GO:0006260">
    <property type="term" value="P:DNA replication"/>
    <property type="evidence" value="ECO:0007669"/>
    <property type="project" value="UniProtKB-KW"/>
</dbReference>
<dbReference type="GO" id="GO:0042026">
    <property type="term" value="P:protein refolding"/>
    <property type="evidence" value="ECO:0007669"/>
    <property type="project" value="TreeGrafter"/>
</dbReference>
<dbReference type="GO" id="GO:0009408">
    <property type="term" value="P:response to heat"/>
    <property type="evidence" value="ECO:0007669"/>
    <property type="project" value="InterPro"/>
</dbReference>
<dbReference type="CDD" id="cd06257">
    <property type="entry name" value="DnaJ"/>
    <property type="match status" value="1"/>
</dbReference>
<dbReference type="CDD" id="cd10747">
    <property type="entry name" value="DnaJ_C"/>
    <property type="match status" value="1"/>
</dbReference>
<dbReference type="CDD" id="cd10719">
    <property type="entry name" value="DnaJ_zf"/>
    <property type="match status" value="1"/>
</dbReference>
<dbReference type="FunFam" id="1.10.287.110:FF:000031">
    <property type="entry name" value="Molecular chaperone DnaJ"/>
    <property type="match status" value="1"/>
</dbReference>
<dbReference type="FunFam" id="2.10.230.10:FF:000002">
    <property type="entry name" value="Molecular chaperone DnaJ"/>
    <property type="match status" value="1"/>
</dbReference>
<dbReference type="FunFam" id="2.60.260.20:FF:000004">
    <property type="entry name" value="Molecular chaperone DnaJ"/>
    <property type="match status" value="1"/>
</dbReference>
<dbReference type="Gene3D" id="1.10.287.110">
    <property type="entry name" value="DnaJ domain"/>
    <property type="match status" value="1"/>
</dbReference>
<dbReference type="Gene3D" id="2.10.230.10">
    <property type="entry name" value="Heat shock protein DnaJ, cysteine-rich domain"/>
    <property type="match status" value="1"/>
</dbReference>
<dbReference type="Gene3D" id="2.60.260.20">
    <property type="entry name" value="Urease metallochaperone UreE, N-terminal domain"/>
    <property type="match status" value="2"/>
</dbReference>
<dbReference type="HAMAP" id="MF_01152">
    <property type="entry name" value="DnaJ"/>
    <property type="match status" value="1"/>
</dbReference>
<dbReference type="InterPro" id="IPR012724">
    <property type="entry name" value="DnaJ"/>
</dbReference>
<dbReference type="InterPro" id="IPR002939">
    <property type="entry name" value="DnaJ_C"/>
</dbReference>
<dbReference type="InterPro" id="IPR001623">
    <property type="entry name" value="DnaJ_domain"/>
</dbReference>
<dbReference type="InterPro" id="IPR018253">
    <property type="entry name" value="DnaJ_domain_CS"/>
</dbReference>
<dbReference type="InterPro" id="IPR008971">
    <property type="entry name" value="HSP40/DnaJ_pept-bd"/>
</dbReference>
<dbReference type="InterPro" id="IPR001305">
    <property type="entry name" value="HSP_DnaJ_Cys-rich_dom"/>
</dbReference>
<dbReference type="InterPro" id="IPR036410">
    <property type="entry name" value="HSP_DnaJ_Cys-rich_dom_sf"/>
</dbReference>
<dbReference type="InterPro" id="IPR036869">
    <property type="entry name" value="J_dom_sf"/>
</dbReference>
<dbReference type="NCBIfam" id="TIGR02349">
    <property type="entry name" value="DnaJ_bact"/>
    <property type="match status" value="1"/>
</dbReference>
<dbReference type="NCBIfam" id="NF008035">
    <property type="entry name" value="PRK10767.1"/>
    <property type="match status" value="1"/>
</dbReference>
<dbReference type="PANTHER" id="PTHR43096:SF48">
    <property type="entry name" value="CHAPERONE PROTEIN DNAJ"/>
    <property type="match status" value="1"/>
</dbReference>
<dbReference type="PANTHER" id="PTHR43096">
    <property type="entry name" value="DNAJ HOMOLOG 1, MITOCHONDRIAL-RELATED"/>
    <property type="match status" value="1"/>
</dbReference>
<dbReference type="Pfam" id="PF00226">
    <property type="entry name" value="DnaJ"/>
    <property type="match status" value="1"/>
</dbReference>
<dbReference type="Pfam" id="PF01556">
    <property type="entry name" value="DnaJ_C"/>
    <property type="match status" value="1"/>
</dbReference>
<dbReference type="Pfam" id="PF00684">
    <property type="entry name" value="DnaJ_CXXCXGXG"/>
    <property type="match status" value="1"/>
</dbReference>
<dbReference type="PRINTS" id="PR00625">
    <property type="entry name" value="JDOMAIN"/>
</dbReference>
<dbReference type="SMART" id="SM00271">
    <property type="entry name" value="DnaJ"/>
    <property type="match status" value="1"/>
</dbReference>
<dbReference type="SUPFAM" id="SSF46565">
    <property type="entry name" value="Chaperone J-domain"/>
    <property type="match status" value="1"/>
</dbReference>
<dbReference type="SUPFAM" id="SSF57938">
    <property type="entry name" value="DnaJ/Hsp40 cysteine-rich domain"/>
    <property type="match status" value="1"/>
</dbReference>
<dbReference type="SUPFAM" id="SSF49493">
    <property type="entry name" value="HSP40/DnaJ peptide-binding domain"/>
    <property type="match status" value="2"/>
</dbReference>
<dbReference type="PROSITE" id="PS00636">
    <property type="entry name" value="DNAJ_1"/>
    <property type="match status" value="1"/>
</dbReference>
<dbReference type="PROSITE" id="PS50076">
    <property type="entry name" value="DNAJ_2"/>
    <property type="match status" value="1"/>
</dbReference>
<dbReference type="PROSITE" id="PS51188">
    <property type="entry name" value="ZF_CR"/>
    <property type="match status" value="1"/>
</dbReference>
<organism>
    <name type="scientific">Burkholderia ambifaria (strain MC40-6)</name>
    <dbReference type="NCBI Taxonomy" id="398577"/>
    <lineage>
        <taxon>Bacteria</taxon>
        <taxon>Pseudomonadati</taxon>
        <taxon>Pseudomonadota</taxon>
        <taxon>Betaproteobacteria</taxon>
        <taxon>Burkholderiales</taxon>
        <taxon>Burkholderiaceae</taxon>
        <taxon>Burkholderia</taxon>
        <taxon>Burkholderia cepacia complex</taxon>
    </lineage>
</organism>
<protein>
    <recommendedName>
        <fullName evidence="1">Chaperone protein DnaJ</fullName>
    </recommendedName>
</protein>